<dbReference type="EMBL" id="FM954972">
    <property type="protein sequence ID" value="CAV17277.1"/>
    <property type="molecule type" value="Genomic_DNA"/>
</dbReference>
<dbReference type="SMR" id="B7VHR5"/>
<dbReference type="STRING" id="575788.VS_0246"/>
<dbReference type="KEGG" id="vsp:VS_0246"/>
<dbReference type="PATRIC" id="fig|575788.5.peg.1634"/>
<dbReference type="eggNOG" id="COG3029">
    <property type="taxonomic scope" value="Bacteria"/>
</dbReference>
<dbReference type="HOGENOM" id="CLU_156492_0_0_6"/>
<dbReference type="Proteomes" id="UP000009100">
    <property type="component" value="Chromosome 1"/>
</dbReference>
<dbReference type="GO" id="GO:0045283">
    <property type="term" value="C:fumarate reductase complex"/>
    <property type="evidence" value="ECO:0007669"/>
    <property type="project" value="UniProtKB-UniRule"/>
</dbReference>
<dbReference type="GO" id="GO:0005886">
    <property type="term" value="C:plasma membrane"/>
    <property type="evidence" value="ECO:0007669"/>
    <property type="project" value="UniProtKB-SubCell"/>
</dbReference>
<dbReference type="GO" id="GO:0000104">
    <property type="term" value="F:succinate dehydrogenase activity"/>
    <property type="evidence" value="ECO:0007669"/>
    <property type="project" value="UniProtKB-UniRule"/>
</dbReference>
<dbReference type="CDD" id="cd00546">
    <property type="entry name" value="QFR_TypeD_subunitC"/>
    <property type="match status" value="1"/>
</dbReference>
<dbReference type="Gene3D" id="1.20.1300.10">
    <property type="entry name" value="Fumarate reductase/succinate dehydrogenase, transmembrane subunit"/>
    <property type="match status" value="1"/>
</dbReference>
<dbReference type="HAMAP" id="MF_00708">
    <property type="entry name" value="Fumarate_red_C"/>
    <property type="match status" value="1"/>
</dbReference>
<dbReference type="InterPro" id="IPR003510">
    <property type="entry name" value="Fumarate_red_C"/>
</dbReference>
<dbReference type="InterPro" id="IPR034804">
    <property type="entry name" value="SQR/QFR_C/D"/>
</dbReference>
<dbReference type="NCBIfam" id="NF003445">
    <property type="entry name" value="PRK04987.1"/>
    <property type="match status" value="1"/>
</dbReference>
<dbReference type="Pfam" id="PF02300">
    <property type="entry name" value="Fumarate_red_C"/>
    <property type="match status" value="1"/>
</dbReference>
<dbReference type="PIRSF" id="PIRSF000180">
    <property type="entry name" value="FrdC"/>
    <property type="match status" value="1"/>
</dbReference>
<dbReference type="SUPFAM" id="SSF81343">
    <property type="entry name" value="Fumarate reductase respiratory complex transmembrane subunits"/>
    <property type="match status" value="1"/>
</dbReference>
<sequence>MSNRKPYVRDMKRTWWSNHPFYRFYMLREATVLPLILFTLFLTFGLGSLVKGPEAWEGWLSFMANPIVVGINIVALLGSLLHAQTFFSMMPQVMPIRLKGKLVDKRIIVLTQWAAVAFISLIVLMVV</sequence>
<comment type="function">
    <text evidence="1">Anchors the catalytic components of the fumarate reductase complex to the cell membrane, binds quinones.</text>
</comment>
<comment type="subunit">
    <text evidence="1">Part of an enzyme complex containing four subunits: a flavoprotein (FrdA), an iron-sulfur protein (FrdB), and two hydrophobic anchor proteins (FrdC and FrdD).</text>
</comment>
<comment type="subcellular location">
    <subcellularLocation>
        <location evidence="1">Cell inner membrane</location>
        <topology evidence="1">Multi-pass membrane protein</topology>
    </subcellularLocation>
</comment>
<comment type="similarity">
    <text evidence="1">Belongs to the FrdC family.</text>
</comment>
<keyword id="KW-0997">Cell inner membrane</keyword>
<keyword id="KW-1003">Cell membrane</keyword>
<keyword id="KW-0472">Membrane</keyword>
<keyword id="KW-0812">Transmembrane</keyword>
<keyword id="KW-1133">Transmembrane helix</keyword>
<gene>
    <name evidence="1" type="primary">frdC</name>
    <name type="ordered locus">VS_0246</name>
</gene>
<evidence type="ECO:0000255" key="1">
    <source>
        <dbReference type="HAMAP-Rule" id="MF_00708"/>
    </source>
</evidence>
<protein>
    <recommendedName>
        <fullName evidence="1">Fumarate reductase subunit C</fullName>
    </recommendedName>
    <alternativeName>
        <fullName evidence="1">Quinol-fumarate reductase subunit C</fullName>
        <shortName evidence="1">QFR subunit C</shortName>
    </alternativeName>
</protein>
<feature type="chain" id="PRO_1000147953" description="Fumarate reductase subunit C">
    <location>
        <begin position="1"/>
        <end position="127"/>
    </location>
</feature>
<feature type="transmembrane region" description="Helical" evidence="1">
    <location>
        <begin position="30"/>
        <end position="50"/>
    </location>
</feature>
<feature type="transmembrane region" description="Helical" evidence="1">
    <location>
        <begin position="58"/>
        <end position="78"/>
    </location>
</feature>
<feature type="transmembrane region" description="Helical" evidence="1">
    <location>
        <begin position="107"/>
        <end position="127"/>
    </location>
</feature>
<name>FRDC_VIBA3</name>
<accession>B7VHR5</accession>
<organism>
    <name type="scientific">Vibrio atlanticus (strain LGP32)</name>
    <name type="common">Vibrio splendidus (strain Mel32)</name>
    <dbReference type="NCBI Taxonomy" id="575788"/>
    <lineage>
        <taxon>Bacteria</taxon>
        <taxon>Pseudomonadati</taxon>
        <taxon>Pseudomonadota</taxon>
        <taxon>Gammaproteobacteria</taxon>
        <taxon>Vibrionales</taxon>
        <taxon>Vibrionaceae</taxon>
        <taxon>Vibrio</taxon>
    </lineage>
</organism>
<reference key="1">
    <citation type="submission" date="2009-02" db="EMBL/GenBank/DDBJ databases">
        <title>Vibrio splendidus str. LGP32 complete genome.</title>
        <authorList>
            <person name="Mazel D."/>
            <person name="Le Roux F."/>
        </authorList>
    </citation>
    <scope>NUCLEOTIDE SEQUENCE [LARGE SCALE GENOMIC DNA]</scope>
    <source>
        <strain>LGP32</strain>
    </source>
</reference>
<proteinExistence type="inferred from homology"/>